<gene>
    <name type="primary">talA</name>
    <name type="ordered locus">Z3720</name>
    <name type="ordered locus">ECs3326</name>
</gene>
<reference key="1">
    <citation type="journal article" date="2001" name="Nature">
        <title>Genome sequence of enterohaemorrhagic Escherichia coli O157:H7.</title>
        <authorList>
            <person name="Perna N.T."/>
            <person name="Plunkett G. III"/>
            <person name="Burland V."/>
            <person name="Mau B."/>
            <person name="Glasner J.D."/>
            <person name="Rose D.J."/>
            <person name="Mayhew G.F."/>
            <person name="Evans P.S."/>
            <person name="Gregor J."/>
            <person name="Kirkpatrick H.A."/>
            <person name="Posfai G."/>
            <person name="Hackett J."/>
            <person name="Klink S."/>
            <person name="Boutin A."/>
            <person name="Shao Y."/>
            <person name="Miller L."/>
            <person name="Grotbeck E.J."/>
            <person name="Davis N.W."/>
            <person name="Lim A."/>
            <person name="Dimalanta E.T."/>
            <person name="Potamousis K."/>
            <person name="Apodaca J."/>
            <person name="Anantharaman T.S."/>
            <person name="Lin J."/>
            <person name="Yen G."/>
            <person name="Schwartz D.C."/>
            <person name="Welch R.A."/>
            <person name="Blattner F.R."/>
        </authorList>
    </citation>
    <scope>NUCLEOTIDE SEQUENCE [LARGE SCALE GENOMIC DNA]</scope>
    <source>
        <strain>O157:H7 / EDL933 / ATCC 700927 / EHEC</strain>
    </source>
</reference>
<reference key="2">
    <citation type="journal article" date="2001" name="DNA Res.">
        <title>Complete genome sequence of enterohemorrhagic Escherichia coli O157:H7 and genomic comparison with a laboratory strain K-12.</title>
        <authorList>
            <person name="Hayashi T."/>
            <person name="Makino K."/>
            <person name="Ohnishi M."/>
            <person name="Kurokawa K."/>
            <person name="Ishii K."/>
            <person name="Yokoyama K."/>
            <person name="Han C.-G."/>
            <person name="Ohtsubo E."/>
            <person name="Nakayama K."/>
            <person name="Murata T."/>
            <person name="Tanaka M."/>
            <person name="Tobe T."/>
            <person name="Iida T."/>
            <person name="Takami H."/>
            <person name="Honda T."/>
            <person name="Sasakawa C."/>
            <person name="Ogasawara N."/>
            <person name="Yasunaga T."/>
            <person name="Kuhara S."/>
            <person name="Shiba T."/>
            <person name="Hattori M."/>
            <person name="Shinagawa H."/>
        </authorList>
    </citation>
    <scope>NUCLEOTIDE SEQUENCE [LARGE SCALE GENOMIC DNA]</scope>
    <source>
        <strain>O157:H7 / Sakai / RIMD 0509952 / EHEC</strain>
    </source>
</reference>
<sequence length="316" mass="35659">MNELDGIKQFTTVVADSGDIESIRHYHPQDATTNPSLLLKAAGLSQYEHLIDDAIAWGKKNGKTQEQQVVAACDKLAVNFGAEILKIVPGRVSTEVDARLSFDKEKSIEKARHLVDLYQQQGVEKSRILIKLASTWEGIRAAEELEKEGINCNLTLLFSFAQARACAEAGVFLISPFVGRIYDWYQARKPMDPYVVEEDPGVKSVRNIYDYYKQHHYETIVMGASFRRTEQILALTGCDRLTIAPNLLKELQEKVSPVVRKLIPPSQTFPRPAPMSEAEFRWEHNQDAMAVEKLSEGIRLFAVDQRKLEDLLAAKL</sequence>
<dbReference type="EC" id="2.2.1.2"/>
<dbReference type="EMBL" id="AE005174">
    <property type="protein sequence ID" value="AAG57573.1"/>
    <property type="molecule type" value="Genomic_DNA"/>
</dbReference>
<dbReference type="EMBL" id="BA000007">
    <property type="protein sequence ID" value="BAB36749.1"/>
    <property type="molecule type" value="Genomic_DNA"/>
</dbReference>
<dbReference type="PIR" id="A85889">
    <property type="entry name" value="A85889"/>
</dbReference>
<dbReference type="PIR" id="F91044">
    <property type="entry name" value="F91044"/>
</dbReference>
<dbReference type="RefSeq" id="NP_311353.1">
    <property type="nucleotide sequence ID" value="NC_002695.1"/>
</dbReference>
<dbReference type="SMR" id="P0A869"/>
<dbReference type="STRING" id="155864.Z3720"/>
<dbReference type="GeneID" id="915272"/>
<dbReference type="KEGG" id="ece:Z3720"/>
<dbReference type="KEGG" id="ecs:ECs_3326"/>
<dbReference type="PATRIC" id="fig|386585.9.peg.3473"/>
<dbReference type="eggNOG" id="COG0176">
    <property type="taxonomic scope" value="Bacteria"/>
</dbReference>
<dbReference type="HOGENOM" id="CLU_047470_0_1_6"/>
<dbReference type="OMA" id="FATIKKY"/>
<dbReference type="UniPathway" id="UPA00115">
    <property type="reaction ID" value="UER00414"/>
</dbReference>
<dbReference type="Proteomes" id="UP000000558">
    <property type="component" value="Chromosome"/>
</dbReference>
<dbReference type="Proteomes" id="UP000002519">
    <property type="component" value="Chromosome"/>
</dbReference>
<dbReference type="GO" id="GO:0005829">
    <property type="term" value="C:cytosol"/>
    <property type="evidence" value="ECO:0007669"/>
    <property type="project" value="TreeGrafter"/>
</dbReference>
<dbReference type="GO" id="GO:0004801">
    <property type="term" value="F:transaldolase activity"/>
    <property type="evidence" value="ECO:0000250"/>
    <property type="project" value="UniProtKB"/>
</dbReference>
<dbReference type="GO" id="GO:0005975">
    <property type="term" value="P:carbohydrate metabolic process"/>
    <property type="evidence" value="ECO:0007669"/>
    <property type="project" value="InterPro"/>
</dbReference>
<dbReference type="GO" id="GO:0006098">
    <property type="term" value="P:pentose-phosphate shunt"/>
    <property type="evidence" value="ECO:0007669"/>
    <property type="project" value="UniProtKB-UniRule"/>
</dbReference>
<dbReference type="CDD" id="cd00957">
    <property type="entry name" value="Transaldolase_TalAB"/>
    <property type="match status" value="1"/>
</dbReference>
<dbReference type="FunFam" id="3.20.20.70:FF:000002">
    <property type="entry name" value="Transaldolase"/>
    <property type="match status" value="1"/>
</dbReference>
<dbReference type="Gene3D" id="3.20.20.70">
    <property type="entry name" value="Aldolase class I"/>
    <property type="match status" value="1"/>
</dbReference>
<dbReference type="HAMAP" id="MF_00492">
    <property type="entry name" value="Transaldolase_1"/>
    <property type="match status" value="1"/>
</dbReference>
<dbReference type="InterPro" id="IPR013785">
    <property type="entry name" value="Aldolase_TIM"/>
</dbReference>
<dbReference type="InterPro" id="IPR001585">
    <property type="entry name" value="TAL/FSA"/>
</dbReference>
<dbReference type="InterPro" id="IPR004730">
    <property type="entry name" value="Transaldolase_1"/>
</dbReference>
<dbReference type="InterPro" id="IPR018225">
    <property type="entry name" value="Transaldolase_AS"/>
</dbReference>
<dbReference type="NCBIfam" id="NF009001">
    <property type="entry name" value="PRK12346.1"/>
    <property type="match status" value="1"/>
</dbReference>
<dbReference type="NCBIfam" id="TIGR00874">
    <property type="entry name" value="talAB"/>
    <property type="match status" value="1"/>
</dbReference>
<dbReference type="PANTHER" id="PTHR10683">
    <property type="entry name" value="TRANSALDOLASE"/>
    <property type="match status" value="1"/>
</dbReference>
<dbReference type="PANTHER" id="PTHR10683:SF16">
    <property type="entry name" value="TRANSALDOLASE A"/>
    <property type="match status" value="1"/>
</dbReference>
<dbReference type="Pfam" id="PF00923">
    <property type="entry name" value="TAL_FSA"/>
    <property type="match status" value="1"/>
</dbReference>
<dbReference type="SUPFAM" id="SSF51569">
    <property type="entry name" value="Aldolase"/>
    <property type="match status" value="1"/>
</dbReference>
<dbReference type="PROSITE" id="PS01054">
    <property type="entry name" value="TRANSALDOLASE_1"/>
    <property type="match status" value="1"/>
</dbReference>
<dbReference type="PROSITE" id="PS00958">
    <property type="entry name" value="TRANSALDOLASE_2"/>
    <property type="match status" value="1"/>
</dbReference>
<evidence type="ECO:0000250" key="1"/>
<evidence type="ECO:0000305" key="2"/>
<name>TALA_ECO57</name>
<accession>P0A869</accession>
<accession>P78258</accession>
<accession>P80218</accession>
<keyword id="KW-0963">Cytoplasm</keyword>
<keyword id="KW-0570">Pentose shunt</keyword>
<keyword id="KW-1185">Reference proteome</keyword>
<keyword id="KW-0704">Schiff base</keyword>
<keyword id="KW-0808">Transferase</keyword>
<proteinExistence type="inferred from homology"/>
<feature type="chain" id="PRO_0000173591" description="Transaldolase A">
    <location>
        <begin position="1"/>
        <end position="316"/>
    </location>
</feature>
<feature type="active site" description="Schiff-base intermediate with substrate" evidence="1">
    <location>
        <position position="131"/>
    </location>
</feature>
<organism>
    <name type="scientific">Escherichia coli O157:H7</name>
    <dbReference type="NCBI Taxonomy" id="83334"/>
    <lineage>
        <taxon>Bacteria</taxon>
        <taxon>Pseudomonadati</taxon>
        <taxon>Pseudomonadota</taxon>
        <taxon>Gammaproteobacteria</taxon>
        <taxon>Enterobacterales</taxon>
        <taxon>Enterobacteriaceae</taxon>
        <taxon>Escherichia</taxon>
    </lineage>
</organism>
<comment type="function">
    <text evidence="1">Transaldolase is important for the balance of metabolites in the pentose-phosphate pathway.</text>
</comment>
<comment type="catalytic activity">
    <reaction>
        <text>D-sedoheptulose 7-phosphate + D-glyceraldehyde 3-phosphate = D-erythrose 4-phosphate + beta-D-fructose 6-phosphate</text>
        <dbReference type="Rhea" id="RHEA:17053"/>
        <dbReference type="ChEBI" id="CHEBI:16897"/>
        <dbReference type="ChEBI" id="CHEBI:57483"/>
        <dbReference type="ChEBI" id="CHEBI:57634"/>
        <dbReference type="ChEBI" id="CHEBI:59776"/>
        <dbReference type="EC" id="2.2.1.2"/>
    </reaction>
</comment>
<comment type="pathway">
    <text>Carbohydrate degradation; pentose phosphate pathway; D-glyceraldehyde 3-phosphate and beta-D-fructose 6-phosphate from D-ribose 5-phosphate and D-xylulose 5-phosphate (non-oxidative stage): step 2/3.</text>
</comment>
<comment type="subunit">
    <text evidence="1">Homodimer.</text>
</comment>
<comment type="subcellular location">
    <subcellularLocation>
        <location evidence="1">Cytoplasm</location>
    </subcellularLocation>
</comment>
<comment type="similarity">
    <text evidence="2">Belongs to the transaldolase family. Type 1 subfamily.</text>
</comment>
<protein>
    <recommendedName>
        <fullName>Transaldolase A</fullName>
        <ecNumber>2.2.1.2</ecNumber>
    </recommendedName>
</protein>